<name>DPO4_CORGL</name>
<protein>
    <recommendedName>
        <fullName evidence="1">DNA polymerase IV</fullName>
        <shortName evidence="1">Pol IV</shortName>
        <ecNumber evidence="1">2.7.7.7</ecNumber>
    </recommendedName>
</protein>
<dbReference type="EC" id="2.7.7.7" evidence="1"/>
<dbReference type="EMBL" id="BA000036">
    <property type="protein sequence ID" value="BAB99537.1"/>
    <property type="molecule type" value="Genomic_DNA"/>
</dbReference>
<dbReference type="EMBL" id="BX927154">
    <property type="protein sequence ID" value="CAF20484.1"/>
    <property type="molecule type" value="Genomic_DNA"/>
</dbReference>
<dbReference type="RefSeq" id="NP_601346.1">
    <property type="nucleotide sequence ID" value="NC_003450.3"/>
</dbReference>
<dbReference type="RefSeq" id="WP_011014912.1">
    <property type="nucleotide sequence ID" value="NC_006958.1"/>
</dbReference>
<dbReference type="SMR" id="Q8NNP4"/>
<dbReference type="STRING" id="196627.cg2355"/>
<dbReference type="KEGG" id="cgb:cg2355"/>
<dbReference type="KEGG" id="cgl:Cgl2144"/>
<dbReference type="PATRIC" id="fig|196627.13.peg.2082"/>
<dbReference type="eggNOG" id="COG0389">
    <property type="taxonomic scope" value="Bacteria"/>
</dbReference>
<dbReference type="HOGENOM" id="CLU_012348_1_0_11"/>
<dbReference type="OrthoDB" id="9808813at2"/>
<dbReference type="BioCyc" id="CORYNE:G18NG-11736-MONOMER"/>
<dbReference type="Proteomes" id="UP000000582">
    <property type="component" value="Chromosome"/>
</dbReference>
<dbReference type="Proteomes" id="UP000001009">
    <property type="component" value="Chromosome"/>
</dbReference>
<dbReference type="GO" id="GO:0005829">
    <property type="term" value="C:cytosol"/>
    <property type="evidence" value="ECO:0007669"/>
    <property type="project" value="TreeGrafter"/>
</dbReference>
<dbReference type="GO" id="GO:0003684">
    <property type="term" value="F:damaged DNA binding"/>
    <property type="evidence" value="ECO:0007669"/>
    <property type="project" value="InterPro"/>
</dbReference>
<dbReference type="GO" id="GO:0003887">
    <property type="term" value="F:DNA-directed DNA polymerase activity"/>
    <property type="evidence" value="ECO:0007669"/>
    <property type="project" value="UniProtKB-UniRule"/>
</dbReference>
<dbReference type="GO" id="GO:0000287">
    <property type="term" value="F:magnesium ion binding"/>
    <property type="evidence" value="ECO:0007669"/>
    <property type="project" value="UniProtKB-UniRule"/>
</dbReference>
<dbReference type="GO" id="GO:0006261">
    <property type="term" value="P:DNA-templated DNA replication"/>
    <property type="evidence" value="ECO:0007669"/>
    <property type="project" value="UniProtKB-UniRule"/>
</dbReference>
<dbReference type="GO" id="GO:0042276">
    <property type="term" value="P:error-prone translesion synthesis"/>
    <property type="evidence" value="ECO:0007669"/>
    <property type="project" value="TreeGrafter"/>
</dbReference>
<dbReference type="GO" id="GO:0009432">
    <property type="term" value="P:SOS response"/>
    <property type="evidence" value="ECO:0007669"/>
    <property type="project" value="TreeGrafter"/>
</dbReference>
<dbReference type="CDD" id="cd03586">
    <property type="entry name" value="PolY_Pol_IV_kappa"/>
    <property type="match status" value="1"/>
</dbReference>
<dbReference type="FunFam" id="1.10.150.20:FF:000068">
    <property type="entry name" value="DNA polymerase IV"/>
    <property type="match status" value="1"/>
</dbReference>
<dbReference type="Gene3D" id="3.30.70.270">
    <property type="match status" value="1"/>
</dbReference>
<dbReference type="Gene3D" id="3.40.1170.60">
    <property type="match status" value="1"/>
</dbReference>
<dbReference type="Gene3D" id="1.10.150.20">
    <property type="entry name" value="5' to 3' exonuclease, C-terminal subdomain"/>
    <property type="match status" value="1"/>
</dbReference>
<dbReference type="Gene3D" id="3.30.1490.100">
    <property type="entry name" value="DNA polymerase, Y-family, little finger domain"/>
    <property type="match status" value="1"/>
</dbReference>
<dbReference type="HAMAP" id="MF_01113">
    <property type="entry name" value="DNApol_IV"/>
    <property type="match status" value="1"/>
</dbReference>
<dbReference type="InterPro" id="IPR043502">
    <property type="entry name" value="DNA/RNA_pol_sf"/>
</dbReference>
<dbReference type="InterPro" id="IPR036775">
    <property type="entry name" value="DNA_pol_Y-fam_lit_finger_sf"/>
</dbReference>
<dbReference type="InterPro" id="IPR017961">
    <property type="entry name" value="DNA_pol_Y-fam_little_finger"/>
</dbReference>
<dbReference type="InterPro" id="IPR050116">
    <property type="entry name" value="DNA_polymerase-Y"/>
</dbReference>
<dbReference type="InterPro" id="IPR022880">
    <property type="entry name" value="DNApol_IV"/>
</dbReference>
<dbReference type="InterPro" id="IPR053848">
    <property type="entry name" value="IMS_HHH_1"/>
</dbReference>
<dbReference type="InterPro" id="IPR043128">
    <property type="entry name" value="Rev_trsase/Diguanyl_cyclase"/>
</dbReference>
<dbReference type="InterPro" id="IPR001126">
    <property type="entry name" value="UmuC"/>
</dbReference>
<dbReference type="NCBIfam" id="NF002677">
    <property type="entry name" value="PRK02406.1"/>
    <property type="match status" value="1"/>
</dbReference>
<dbReference type="NCBIfam" id="NF002882">
    <property type="entry name" value="PRK03348.1"/>
    <property type="match status" value="1"/>
</dbReference>
<dbReference type="PANTHER" id="PTHR11076:SF33">
    <property type="entry name" value="DNA POLYMERASE KAPPA"/>
    <property type="match status" value="1"/>
</dbReference>
<dbReference type="PANTHER" id="PTHR11076">
    <property type="entry name" value="DNA REPAIR POLYMERASE UMUC / TRANSFERASE FAMILY MEMBER"/>
    <property type="match status" value="1"/>
</dbReference>
<dbReference type="Pfam" id="PF00817">
    <property type="entry name" value="IMS"/>
    <property type="match status" value="1"/>
</dbReference>
<dbReference type="Pfam" id="PF11799">
    <property type="entry name" value="IMS_C"/>
    <property type="match status" value="1"/>
</dbReference>
<dbReference type="Pfam" id="PF21999">
    <property type="entry name" value="IMS_HHH_1"/>
    <property type="match status" value="1"/>
</dbReference>
<dbReference type="SUPFAM" id="SSF56672">
    <property type="entry name" value="DNA/RNA polymerases"/>
    <property type="match status" value="1"/>
</dbReference>
<dbReference type="SUPFAM" id="SSF100879">
    <property type="entry name" value="Lesion bypass DNA polymerase (Y-family), little finger domain"/>
    <property type="match status" value="1"/>
</dbReference>
<dbReference type="PROSITE" id="PS50173">
    <property type="entry name" value="UMUC"/>
    <property type="match status" value="1"/>
</dbReference>
<sequence length="467" mass="50688">MQRWVLHIDMDAFFASCEQLTRPTLRGRPVLVGGVSGRGVVAGASYEARKFGARSAMPMHQAKARVGFGAVVVTPRHIVYSAASRRVFQIVEKRAGIVERLSIDEGFMEPEALVGATPEEVKQWAEELRAEIKEVTGLPSSVGAGSGKQIAKIGSGEAKPDGVFVVPVDKQHDLLDPLPVGALWGVGPVTGSKLASMGVETIGDLAALTQKEVEISLGATIGISLWNLARGIDDRPVEPRAEAKQISQEHTYEKDLLTRQQVDAAIIRSAEGAHRRLLKDGRGARTVSVKLRMADFRIESRSYTLSYATDDYATLEATAFRLARYPGEVGPIRLVGVSFSGLEESRQDILFPELDQQIIVPPAPDTDYEVGVQSSSSSESTQVEAPQDVALSMWCATQDVYHPEYGHGWVQGAGHGVVSVRFETRSTTKGRTKSFSMDDPDLTPADPLDSLDWADWFAENGETGDDE</sequence>
<feature type="chain" id="PRO_0000173911" description="DNA polymerase IV">
    <location>
        <begin position="1"/>
        <end position="467"/>
    </location>
</feature>
<feature type="domain" description="UmuC" evidence="1">
    <location>
        <begin position="5"/>
        <end position="187"/>
    </location>
</feature>
<feature type="region of interest" description="Disordered" evidence="2">
    <location>
        <begin position="364"/>
        <end position="383"/>
    </location>
</feature>
<feature type="region of interest" description="Disordered" evidence="2">
    <location>
        <begin position="429"/>
        <end position="449"/>
    </location>
</feature>
<feature type="active site" evidence="1">
    <location>
        <position position="105"/>
    </location>
</feature>
<feature type="binding site" evidence="1">
    <location>
        <position position="9"/>
    </location>
    <ligand>
        <name>Mg(2+)</name>
        <dbReference type="ChEBI" id="CHEBI:18420"/>
    </ligand>
</feature>
<feature type="binding site" evidence="1">
    <location>
        <position position="104"/>
    </location>
    <ligand>
        <name>Mg(2+)</name>
        <dbReference type="ChEBI" id="CHEBI:18420"/>
    </ligand>
</feature>
<feature type="site" description="Substrate discrimination" evidence="1">
    <location>
        <position position="14"/>
    </location>
</feature>
<reference key="1">
    <citation type="journal article" date="2003" name="Appl. Microbiol. Biotechnol.">
        <title>The Corynebacterium glutamicum genome: features and impacts on biotechnological processes.</title>
        <authorList>
            <person name="Ikeda M."/>
            <person name="Nakagawa S."/>
        </authorList>
    </citation>
    <scope>NUCLEOTIDE SEQUENCE [LARGE SCALE GENOMIC DNA]</scope>
    <source>
        <strain>ATCC 13032 / DSM 20300 / JCM 1318 / BCRC 11384 / CCUG 27702 / LMG 3730 / NBRC 12168 / NCIMB 10025 / NRRL B-2784 / 534</strain>
    </source>
</reference>
<reference key="2">
    <citation type="journal article" date="2003" name="J. Biotechnol.">
        <title>The complete Corynebacterium glutamicum ATCC 13032 genome sequence and its impact on the production of L-aspartate-derived amino acids and vitamins.</title>
        <authorList>
            <person name="Kalinowski J."/>
            <person name="Bathe B."/>
            <person name="Bartels D."/>
            <person name="Bischoff N."/>
            <person name="Bott M."/>
            <person name="Burkovski A."/>
            <person name="Dusch N."/>
            <person name="Eggeling L."/>
            <person name="Eikmanns B.J."/>
            <person name="Gaigalat L."/>
            <person name="Goesmann A."/>
            <person name="Hartmann M."/>
            <person name="Huthmacher K."/>
            <person name="Kraemer R."/>
            <person name="Linke B."/>
            <person name="McHardy A.C."/>
            <person name="Meyer F."/>
            <person name="Moeckel B."/>
            <person name="Pfefferle W."/>
            <person name="Puehler A."/>
            <person name="Rey D.A."/>
            <person name="Rueckert C."/>
            <person name="Rupp O."/>
            <person name="Sahm H."/>
            <person name="Wendisch V.F."/>
            <person name="Wiegraebe I."/>
            <person name="Tauch A."/>
        </authorList>
    </citation>
    <scope>NUCLEOTIDE SEQUENCE [LARGE SCALE GENOMIC DNA]</scope>
    <source>
        <strain>ATCC 13032 / DSM 20300 / JCM 1318 / BCRC 11384 / CCUG 27702 / LMG 3730 / NBRC 12168 / NCIMB 10025 / NRRL B-2784 / 534</strain>
    </source>
</reference>
<accession>Q8NNP4</accession>
<keyword id="KW-0963">Cytoplasm</keyword>
<keyword id="KW-0227">DNA damage</keyword>
<keyword id="KW-0234">DNA repair</keyword>
<keyword id="KW-0235">DNA replication</keyword>
<keyword id="KW-0238">DNA-binding</keyword>
<keyword id="KW-0239">DNA-directed DNA polymerase</keyword>
<keyword id="KW-0460">Magnesium</keyword>
<keyword id="KW-0479">Metal-binding</keyword>
<keyword id="KW-0515">Mutator protein</keyword>
<keyword id="KW-0548">Nucleotidyltransferase</keyword>
<keyword id="KW-1185">Reference proteome</keyword>
<keyword id="KW-0808">Transferase</keyword>
<proteinExistence type="inferred from homology"/>
<gene>
    <name evidence="1" type="primary">dinB</name>
    <name type="synonym">dinP</name>
    <name type="ordered locus">Cgl2144</name>
    <name type="ordered locus">cg2355</name>
</gene>
<evidence type="ECO:0000255" key="1">
    <source>
        <dbReference type="HAMAP-Rule" id="MF_01113"/>
    </source>
</evidence>
<evidence type="ECO:0000256" key="2">
    <source>
        <dbReference type="SAM" id="MobiDB-lite"/>
    </source>
</evidence>
<comment type="function">
    <text evidence="1">Poorly processive, error-prone DNA polymerase involved in untargeted mutagenesis. Copies undamaged DNA at stalled replication forks, which arise in vivo from mismatched or misaligned primer ends. These misaligned primers can be extended by PolIV. Exhibits no 3'-5' exonuclease (proofreading) activity. May be involved in translesional synthesis, in conjunction with the beta clamp from PolIII.</text>
</comment>
<comment type="catalytic activity">
    <reaction evidence="1">
        <text>DNA(n) + a 2'-deoxyribonucleoside 5'-triphosphate = DNA(n+1) + diphosphate</text>
        <dbReference type="Rhea" id="RHEA:22508"/>
        <dbReference type="Rhea" id="RHEA-COMP:17339"/>
        <dbReference type="Rhea" id="RHEA-COMP:17340"/>
        <dbReference type="ChEBI" id="CHEBI:33019"/>
        <dbReference type="ChEBI" id="CHEBI:61560"/>
        <dbReference type="ChEBI" id="CHEBI:173112"/>
        <dbReference type="EC" id="2.7.7.7"/>
    </reaction>
</comment>
<comment type="cofactor">
    <cofactor evidence="1">
        <name>Mg(2+)</name>
        <dbReference type="ChEBI" id="CHEBI:18420"/>
    </cofactor>
    <text evidence="1">Binds 2 magnesium ions per subunit.</text>
</comment>
<comment type="subunit">
    <text evidence="1">Monomer.</text>
</comment>
<comment type="subcellular location">
    <subcellularLocation>
        <location evidence="1">Cytoplasm</location>
    </subcellularLocation>
</comment>
<comment type="similarity">
    <text evidence="1">Belongs to the DNA polymerase type-Y family.</text>
</comment>
<organism>
    <name type="scientific">Corynebacterium glutamicum (strain ATCC 13032 / DSM 20300 / JCM 1318 / BCRC 11384 / CCUG 27702 / LMG 3730 / NBRC 12168 / NCIMB 10025 / NRRL B-2784 / 534)</name>
    <dbReference type="NCBI Taxonomy" id="196627"/>
    <lineage>
        <taxon>Bacteria</taxon>
        <taxon>Bacillati</taxon>
        <taxon>Actinomycetota</taxon>
        <taxon>Actinomycetes</taxon>
        <taxon>Mycobacteriales</taxon>
        <taxon>Corynebacteriaceae</taxon>
        <taxon>Corynebacterium</taxon>
    </lineage>
</organism>